<feature type="signal peptide" evidence="2">
    <location>
        <begin position="1"/>
        <end position="26"/>
    </location>
</feature>
<feature type="chain" id="PRO_0000371364" description="Frizzled and smoothened-like protein B">
    <location>
        <begin position="27"/>
        <end position="642"/>
    </location>
</feature>
<feature type="topological domain" description="Extracellular" evidence="2">
    <location>
        <begin position="27"/>
        <end position="264"/>
    </location>
</feature>
<feature type="transmembrane region" description="Helical; Name=1" evidence="2">
    <location>
        <begin position="265"/>
        <end position="285"/>
    </location>
</feature>
<feature type="topological domain" description="Cytoplasmic" evidence="2">
    <location>
        <begin position="286"/>
        <end position="294"/>
    </location>
</feature>
<feature type="transmembrane region" description="Helical; Name=2" evidence="2">
    <location>
        <begin position="295"/>
        <end position="315"/>
    </location>
</feature>
<feature type="topological domain" description="Extracellular" evidence="2">
    <location>
        <begin position="316"/>
        <end position="344"/>
    </location>
</feature>
<feature type="transmembrane region" description="Helical; Name=3" evidence="2">
    <location>
        <begin position="345"/>
        <end position="365"/>
    </location>
</feature>
<feature type="topological domain" description="Cytoplasmic" evidence="2">
    <location>
        <begin position="366"/>
        <end position="375"/>
    </location>
</feature>
<feature type="transmembrane region" description="Helical; Name=4" evidence="2">
    <location>
        <begin position="376"/>
        <end position="398"/>
    </location>
</feature>
<feature type="topological domain" description="Extracellular" evidence="2">
    <location>
        <begin position="399"/>
        <end position="416"/>
    </location>
</feature>
<feature type="transmembrane region" description="Helical; Name=5" evidence="2">
    <location>
        <begin position="417"/>
        <end position="437"/>
    </location>
</feature>
<feature type="topological domain" description="Cytoplasmic" evidence="2">
    <location>
        <begin position="438"/>
        <end position="460"/>
    </location>
</feature>
<feature type="transmembrane region" description="Helical; Name=6" evidence="2">
    <location>
        <begin position="461"/>
        <end position="481"/>
    </location>
</feature>
<feature type="topological domain" description="Extracellular" evidence="2">
    <location>
        <begin position="482"/>
        <end position="514"/>
    </location>
</feature>
<feature type="transmembrane region" description="Helical; Name=7" evidence="2">
    <location>
        <begin position="515"/>
        <end position="535"/>
    </location>
</feature>
<feature type="topological domain" description="Cytoplasmic" evidence="2">
    <location>
        <begin position="536"/>
        <end position="642"/>
    </location>
</feature>
<feature type="domain" description="FZ">
    <location>
        <begin position="47"/>
        <end position="197"/>
    </location>
</feature>
<feature type="region of interest" description="Disordered" evidence="3">
    <location>
        <begin position="578"/>
        <end position="642"/>
    </location>
</feature>
<feature type="coiled-coil region" evidence="2">
    <location>
        <begin position="584"/>
        <end position="611"/>
    </location>
</feature>
<feature type="compositionally biased region" description="Low complexity" evidence="3">
    <location>
        <begin position="583"/>
        <end position="598"/>
    </location>
</feature>
<feature type="compositionally biased region" description="Basic and acidic residues" evidence="3">
    <location>
        <begin position="599"/>
        <end position="609"/>
    </location>
</feature>
<feature type="compositionally biased region" description="Polar residues" evidence="3">
    <location>
        <begin position="614"/>
        <end position="623"/>
    </location>
</feature>
<feature type="compositionally biased region" description="Polar residues" evidence="3">
    <location>
        <begin position="632"/>
        <end position="642"/>
    </location>
</feature>
<feature type="glycosylation site" description="N-linked (GlcNAc...) asparagine" evidence="2">
    <location>
        <position position="80"/>
    </location>
</feature>
<feature type="glycosylation site" description="N-linked (GlcNAc...) asparagine" evidence="2">
    <location>
        <position position="153"/>
    </location>
</feature>
<feature type="glycosylation site" description="N-linked (GlcNAc...) asparagine" evidence="2">
    <location>
        <position position="162"/>
    </location>
</feature>
<feature type="glycosylation site" description="N-linked (GlcNAc...) asparagine" evidence="2">
    <location>
        <position position="177"/>
    </location>
</feature>
<feature type="glycosylation site" description="N-linked (GlcNAc...) asparagine" evidence="2">
    <location>
        <position position="203"/>
    </location>
</feature>
<feature type="glycosylation site" description="N-linked (GlcNAc...) asparagine" evidence="2">
    <location>
        <position position="222"/>
    </location>
</feature>
<feature type="glycosylation site" description="N-linked (GlcNAc...) asparagine" evidence="2">
    <location>
        <position position="261"/>
    </location>
</feature>
<feature type="glycosylation site" description="N-linked (GlcNAc...) asparagine" evidence="2">
    <location>
        <position position="482"/>
    </location>
</feature>
<feature type="disulfide bond" evidence="1">
    <location>
        <begin position="52"/>
        <end position="123"/>
    </location>
</feature>
<feature type="disulfide bond" evidence="1">
    <location>
        <begin position="65"/>
        <end position="116"/>
    </location>
</feature>
<feature type="disulfide bond" evidence="1">
    <location>
        <begin position="143"/>
        <end position="194"/>
    </location>
</feature>
<sequence length="642" mass="72406">MFNKNNNNNKIIIILKLFLIILIVNNNNNIKTFGLNLPDGYGAGLVDPTATCSNYIGDSIDQPLCNEKLPNYKNIYTSKNITIQYINQKIVEKTFISLTFLQSKCFDLNFAEFGICDIYFPPCFQTPTTITPIKSVSLPQRLCKSACERMVSNCSSLGASLNCSDPLKFPRIATLYNLTDYGFTANGGFFPVPCSDPLATFENKSTTSELIEICPSPLLLFNSSDPKYSADRGYTYLTPTNCVLPCVAPIYTEKKWHQMYNMSKILSTISFVCSIYNVLTFGILNHRRSKYNYCITFFSASVIIITMMDIVTYGIGYEKLLCPEPGRFAVQSDVSCGATGALFHIGITNGVFWWTTMSICLFAVVKRIKLFDFRYFIIFNTTASLISVIIPLAGNAFMAGTGSLACWIRKTWYVNSVFWIPCGIALTIGSVCIILVIYEIYKITKNVSTKDNRMILLQIKPFLCVTLVGGSFYYLFIFNFDNESHSKEYKEKVVDYVMCLLSDTGKECLMAGPNYVAYFVFYFFIRLFGITFFCIYGTSQNARDIWIHSKILNHPNIKPFLLKYNIINFNSMTHYGSGTNPTSNSKNSKNNQNNQNNNSRKEFESKNIELEVNESISKGQTTRGADDEEESNINSASNTSSD</sequence>
<protein>
    <recommendedName>
        <fullName>Frizzled and smoothened-like protein B</fullName>
    </recommendedName>
</protein>
<reference key="1">
    <citation type="journal article" date="2005" name="Nature">
        <title>The genome of the social amoeba Dictyostelium discoideum.</title>
        <authorList>
            <person name="Eichinger L."/>
            <person name="Pachebat J.A."/>
            <person name="Gloeckner G."/>
            <person name="Rajandream M.A."/>
            <person name="Sucgang R."/>
            <person name="Berriman M."/>
            <person name="Song J."/>
            <person name="Olsen R."/>
            <person name="Szafranski K."/>
            <person name="Xu Q."/>
            <person name="Tunggal B."/>
            <person name="Kummerfeld S."/>
            <person name="Madera M."/>
            <person name="Konfortov B.A."/>
            <person name="Rivero F."/>
            <person name="Bankier A.T."/>
            <person name="Lehmann R."/>
            <person name="Hamlin N."/>
            <person name="Davies R."/>
            <person name="Gaudet P."/>
            <person name="Fey P."/>
            <person name="Pilcher K."/>
            <person name="Chen G."/>
            <person name="Saunders D."/>
            <person name="Sodergren E.J."/>
            <person name="Davis P."/>
            <person name="Kerhornou A."/>
            <person name="Nie X."/>
            <person name="Hall N."/>
            <person name="Anjard C."/>
            <person name="Hemphill L."/>
            <person name="Bason N."/>
            <person name="Farbrother P."/>
            <person name="Desany B."/>
            <person name="Just E."/>
            <person name="Morio T."/>
            <person name="Rost R."/>
            <person name="Churcher C.M."/>
            <person name="Cooper J."/>
            <person name="Haydock S."/>
            <person name="van Driessche N."/>
            <person name="Cronin A."/>
            <person name="Goodhead I."/>
            <person name="Muzny D.M."/>
            <person name="Mourier T."/>
            <person name="Pain A."/>
            <person name="Lu M."/>
            <person name="Harper D."/>
            <person name="Lindsay R."/>
            <person name="Hauser H."/>
            <person name="James K.D."/>
            <person name="Quiles M."/>
            <person name="Madan Babu M."/>
            <person name="Saito T."/>
            <person name="Buchrieser C."/>
            <person name="Wardroper A."/>
            <person name="Felder M."/>
            <person name="Thangavelu M."/>
            <person name="Johnson D."/>
            <person name="Knights A."/>
            <person name="Loulseged H."/>
            <person name="Mungall K.L."/>
            <person name="Oliver K."/>
            <person name="Price C."/>
            <person name="Quail M.A."/>
            <person name="Urushihara H."/>
            <person name="Hernandez J."/>
            <person name="Rabbinowitsch E."/>
            <person name="Steffen D."/>
            <person name="Sanders M."/>
            <person name="Ma J."/>
            <person name="Kohara Y."/>
            <person name="Sharp S."/>
            <person name="Simmonds M.N."/>
            <person name="Spiegler S."/>
            <person name="Tivey A."/>
            <person name="Sugano S."/>
            <person name="White B."/>
            <person name="Walker D."/>
            <person name="Woodward J.R."/>
            <person name="Winckler T."/>
            <person name="Tanaka Y."/>
            <person name="Shaulsky G."/>
            <person name="Schleicher M."/>
            <person name="Weinstock G.M."/>
            <person name="Rosenthal A."/>
            <person name="Cox E.C."/>
            <person name="Chisholm R.L."/>
            <person name="Gibbs R.A."/>
            <person name="Loomis W.F."/>
            <person name="Platzer M."/>
            <person name="Kay R.R."/>
            <person name="Williams J.G."/>
            <person name="Dear P.H."/>
            <person name="Noegel A.A."/>
            <person name="Barrell B.G."/>
            <person name="Kuspa A."/>
        </authorList>
    </citation>
    <scope>NUCLEOTIDE SEQUENCE [LARGE SCALE GENOMIC DNA]</scope>
    <source>
        <strain>AX4</strain>
    </source>
</reference>
<reference key="2">
    <citation type="journal article" date="2006" name="Eur. J. Cell Biol.">
        <title>The Dictyostelium repertoire of seven transmembrane domain receptors.</title>
        <authorList>
            <person name="Prabhu Y."/>
            <person name="Eichinger L."/>
        </authorList>
    </citation>
    <scope>NOMENCLATURE</scope>
</reference>
<reference key="3">
    <citation type="journal article" date="2008" name="BMC Genomics">
        <title>Genome-wide transcriptional changes induced by phagocytosis or growth on bacteria in Dictyostelium.</title>
        <authorList>
            <person name="Sillo A."/>
            <person name="Bloomfield G."/>
            <person name="Balest A."/>
            <person name="Balbo A."/>
            <person name="Pergolizzi B."/>
            <person name="Peracino B."/>
            <person name="Skelton J."/>
            <person name="Ivens A."/>
            <person name="Bozzaro S."/>
        </authorList>
    </citation>
    <scope>INDUCTION [LARGE SCALE ANALYSIS]</scope>
</reference>
<name>FSLB_DICDI</name>
<comment type="subcellular location">
    <subcellularLocation>
        <location evidence="5">Membrane</location>
        <topology evidence="5">Multi-pass membrane protein</topology>
    </subcellularLocation>
</comment>
<comment type="induction">
    <text evidence="4">Down-regulated by phagocytic stimuli and growth on bacteria.</text>
</comment>
<comment type="similarity">
    <text evidence="5">Belongs to the G-protein coupled receptor Fz/Smo family.</text>
</comment>
<keyword id="KW-0175">Coiled coil</keyword>
<keyword id="KW-1015">Disulfide bond</keyword>
<keyword id="KW-0325">Glycoprotein</keyword>
<keyword id="KW-0472">Membrane</keyword>
<keyword id="KW-0675">Receptor</keyword>
<keyword id="KW-1185">Reference proteome</keyword>
<keyword id="KW-0732">Signal</keyword>
<keyword id="KW-0812">Transmembrane</keyword>
<keyword id="KW-1133">Transmembrane helix</keyword>
<proteinExistence type="evidence at transcript level"/>
<organism>
    <name type="scientific">Dictyostelium discoideum</name>
    <name type="common">Social amoeba</name>
    <dbReference type="NCBI Taxonomy" id="44689"/>
    <lineage>
        <taxon>Eukaryota</taxon>
        <taxon>Amoebozoa</taxon>
        <taxon>Evosea</taxon>
        <taxon>Eumycetozoa</taxon>
        <taxon>Dictyostelia</taxon>
        <taxon>Dictyosteliales</taxon>
        <taxon>Dictyosteliaceae</taxon>
        <taxon>Dictyostelium</taxon>
    </lineage>
</organism>
<gene>
    <name type="primary">fslB</name>
    <name type="ORF">DDB_G0270730</name>
</gene>
<accession>Q55CD6</accession>
<evidence type="ECO:0000250" key="1"/>
<evidence type="ECO:0000255" key="2"/>
<evidence type="ECO:0000256" key="3">
    <source>
        <dbReference type="SAM" id="MobiDB-lite"/>
    </source>
</evidence>
<evidence type="ECO:0000269" key="4">
    <source>
    </source>
</evidence>
<evidence type="ECO:0000305" key="5"/>
<dbReference type="EMBL" id="AAFI02000005">
    <property type="protein sequence ID" value="EAL72715.1"/>
    <property type="molecule type" value="Genomic_DNA"/>
</dbReference>
<dbReference type="RefSeq" id="XP_646545.1">
    <property type="nucleotide sequence ID" value="XM_641453.1"/>
</dbReference>
<dbReference type="SMR" id="Q55CD6"/>
<dbReference type="FunCoup" id="Q55CD6">
    <property type="interactions" value="20"/>
</dbReference>
<dbReference type="STRING" id="44689.Q55CD6"/>
<dbReference type="GlyCosmos" id="Q55CD6">
    <property type="glycosylation" value="8 sites, No reported glycans"/>
</dbReference>
<dbReference type="GlyGen" id="Q55CD6">
    <property type="glycosylation" value="8 sites"/>
</dbReference>
<dbReference type="PaxDb" id="44689-DDB0230120"/>
<dbReference type="EnsemblProtists" id="EAL72715">
    <property type="protein sequence ID" value="EAL72715"/>
    <property type="gene ID" value="DDB_G0270730"/>
</dbReference>
<dbReference type="GeneID" id="8617511"/>
<dbReference type="KEGG" id="ddi:DDB_G0270730"/>
<dbReference type="dictyBase" id="DDB_G0270730">
    <property type="gene designation" value="fslB"/>
</dbReference>
<dbReference type="VEuPathDB" id="AmoebaDB:DDB_G0270730"/>
<dbReference type="eggNOG" id="ENOG502T166">
    <property type="taxonomic scope" value="Eukaryota"/>
</dbReference>
<dbReference type="HOGENOM" id="CLU_030318_0_0_1"/>
<dbReference type="InParanoid" id="Q55CD6"/>
<dbReference type="OMA" id="LACWIRK"/>
<dbReference type="PhylomeDB" id="Q55CD6"/>
<dbReference type="PRO" id="PR:Q55CD6"/>
<dbReference type="Proteomes" id="UP000002195">
    <property type="component" value="Chromosome 1"/>
</dbReference>
<dbReference type="GO" id="GO:0016020">
    <property type="term" value="C:membrane"/>
    <property type="evidence" value="ECO:0007669"/>
    <property type="project" value="UniProtKB-SubCell"/>
</dbReference>
<dbReference type="GO" id="GO:0004888">
    <property type="term" value="F:transmembrane signaling receptor activity"/>
    <property type="evidence" value="ECO:0007669"/>
    <property type="project" value="InterPro"/>
</dbReference>
<dbReference type="GO" id="GO:0007166">
    <property type="term" value="P:cell surface receptor signaling pathway"/>
    <property type="evidence" value="ECO:0007669"/>
    <property type="project" value="InterPro"/>
</dbReference>
<dbReference type="CDD" id="cd07066">
    <property type="entry name" value="CRD_FZ"/>
    <property type="match status" value="1"/>
</dbReference>
<dbReference type="Gene3D" id="1.10.2000.10">
    <property type="entry name" value="Frizzled cysteine-rich domain"/>
    <property type="match status" value="1"/>
</dbReference>
<dbReference type="Gene3D" id="1.20.1070.10">
    <property type="entry name" value="Rhodopsin 7-helix transmembrane proteins"/>
    <property type="match status" value="1"/>
</dbReference>
<dbReference type="InterPro" id="IPR000539">
    <property type="entry name" value="Frizzled/Smoothened_7TM"/>
</dbReference>
<dbReference type="InterPro" id="IPR036790">
    <property type="entry name" value="Frizzled_dom_sf"/>
</dbReference>
<dbReference type="InterPro" id="IPR017981">
    <property type="entry name" value="GPCR_2-like_7TM"/>
</dbReference>
<dbReference type="InterPro" id="IPR050949">
    <property type="entry name" value="GPCR_Fz/Smo-like"/>
</dbReference>
<dbReference type="PANTHER" id="PTHR31787:SF1">
    <property type="entry name" value="FRIZZLED AND SMOOTHENED-LIKE PROTEIN B-RELATED"/>
    <property type="match status" value="1"/>
</dbReference>
<dbReference type="PANTHER" id="PTHR31787">
    <property type="entry name" value="G-PROTEIN-COUPLED RECEPTOR GPCR FAMILY PROTEIN"/>
    <property type="match status" value="1"/>
</dbReference>
<dbReference type="Pfam" id="PF01534">
    <property type="entry name" value="Frizzled"/>
    <property type="match status" value="1"/>
</dbReference>
<dbReference type="SUPFAM" id="SSF63501">
    <property type="entry name" value="Frizzled cysteine-rich domain"/>
    <property type="match status" value="1"/>
</dbReference>
<dbReference type="PROSITE" id="PS50261">
    <property type="entry name" value="G_PROTEIN_RECEP_F2_4"/>
    <property type="match status" value="1"/>
</dbReference>